<comment type="sequence caution" evidence="2">
    <conflict type="erroneous initiation">
        <sequence resource="EMBL-CDS" id="AAN45692"/>
    </conflict>
    <text>Extended N-terminus.</text>
</comment>
<comment type="sequence caution" evidence="2">
    <conflict type="erroneous initiation">
        <sequence resource="EMBL-CDS" id="AAP19478"/>
    </conflict>
    <text>Extended N-terminus.</text>
</comment>
<name>YTFH_SHIFL</name>
<sequence>MSQVSLSQQLKEGNLFAEQCPSREVLKHVTSRWGVLILVALREGTHRFSDLRRKIGGVSEKMLAQSLQALEQDGFLNRIAYPVVPPHVEYSLTPLGEQVSEKVAALADWIELNLPEVLAVRDERAA</sequence>
<protein>
    <recommendedName>
        <fullName>Uncharacterized HTH-type transcriptional regulator YtfH</fullName>
    </recommendedName>
</protein>
<dbReference type="EMBL" id="AE005674">
    <property type="protein sequence ID" value="AAN45692.2"/>
    <property type="status" value="ALT_INIT"/>
    <property type="molecule type" value="Genomic_DNA"/>
</dbReference>
<dbReference type="EMBL" id="AE014073">
    <property type="protein sequence ID" value="AAP19478.1"/>
    <property type="status" value="ALT_INIT"/>
    <property type="molecule type" value="Genomic_DNA"/>
</dbReference>
<dbReference type="RefSeq" id="NP_709985.2">
    <property type="nucleotide sequence ID" value="NC_004337.2"/>
</dbReference>
<dbReference type="RefSeq" id="WP_000084622.1">
    <property type="nucleotide sequence ID" value="NZ_WPGW01000133.1"/>
</dbReference>
<dbReference type="SMR" id="P0ACN3"/>
<dbReference type="STRING" id="198214.SF4275"/>
<dbReference type="PaxDb" id="198214-SF4275"/>
<dbReference type="GeneID" id="1027772"/>
<dbReference type="KEGG" id="sfl:SF4275"/>
<dbReference type="KEGG" id="sfx:S4540"/>
<dbReference type="PATRIC" id="fig|198214.7.peg.5043"/>
<dbReference type="HOGENOM" id="CLU_111585_2_0_6"/>
<dbReference type="Proteomes" id="UP000001006">
    <property type="component" value="Chromosome"/>
</dbReference>
<dbReference type="Proteomes" id="UP000002673">
    <property type="component" value="Chromosome"/>
</dbReference>
<dbReference type="GO" id="GO:0003677">
    <property type="term" value="F:DNA binding"/>
    <property type="evidence" value="ECO:0007669"/>
    <property type="project" value="UniProtKB-KW"/>
</dbReference>
<dbReference type="Gene3D" id="1.10.10.10">
    <property type="entry name" value="Winged helix-like DNA-binding domain superfamily/Winged helix DNA-binding domain"/>
    <property type="match status" value="1"/>
</dbReference>
<dbReference type="InterPro" id="IPR002577">
    <property type="entry name" value="HTH_HxlR"/>
</dbReference>
<dbReference type="InterPro" id="IPR036388">
    <property type="entry name" value="WH-like_DNA-bd_sf"/>
</dbReference>
<dbReference type="InterPro" id="IPR036390">
    <property type="entry name" value="WH_DNA-bd_sf"/>
</dbReference>
<dbReference type="PANTHER" id="PTHR33204:SF37">
    <property type="entry name" value="HTH-TYPE TRANSCRIPTIONAL REGULATOR YODB"/>
    <property type="match status" value="1"/>
</dbReference>
<dbReference type="PANTHER" id="PTHR33204">
    <property type="entry name" value="TRANSCRIPTIONAL REGULATOR, MARR FAMILY"/>
    <property type="match status" value="1"/>
</dbReference>
<dbReference type="Pfam" id="PF01638">
    <property type="entry name" value="HxlR"/>
    <property type="match status" value="1"/>
</dbReference>
<dbReference type="SUPFAM" id="SSF46785">
    <property type="entry name" value="Winged helix' DNA-binding domain"/>
    <property type="match status" value="1"/>
</dbReference>
<dbReference type="PROSITE" id="PS51118">
    <property type="entry name" value="HTH_HXLR"/>
    <property type="match status" value="1"/>
</dbReference>
<gene>
    <name type="primary">ytfH</name>
    <name type="ordered locus">SF4275</name>
    <name type="ordered locus">S4540</name>
</gene>
<feature type="chain" id="PRO_0000148882" description="Uncharacterized HTH-type transcriptional regulator YtfH">
    <location>
        <begin position="1"/>
        <end position="126"/>
    </location>
</feature>
<feature type="domain" description="HTH hxlR-type" evidence="1">
    <location>
        <begin position="20"/>
        <end position="118"/>
    </location>
</feature>
<organism>
    <name type="scientific">Shigella flexneri</name>
    <dbReference type="NCBI Taxonomy" id="623"/>
    <lineage>
        <taxon>Bacteria</taxon>
        <taxon>Pseudomonadati</taxon>
        <taxon>Pseudomonadota</taxon>
        <taxon>Gammaproteobacteria</taxon>
        <taxon>Enterobacterales</taxon>
        <taxon>Enterobacteriaceae</taxon>
        <taxon>Shigella</taxon>
    </lineage>
</organism>
<keyword id="KW-0238">DNA-binding</keyword>
<keyword id="KW-1185">Reference proteome</keyword>
<keyword id="KW-0804">Transcription</keyword>
<keyword id="KW-0805">Transcription regulation</keyword>
<reference key="1">
    <citation type="journal article" date="2002" name="Nucleic Acids Res.">
        <title>Genome sequence of Shigella flexneri 2a: insights into pathogenicity through comparison with genomes of Escherichia coli K12 and O157.</title>
        <authorList>
            <person name="Jin Q."/>
            <person name="Yuan Z."/>
            <person name="Xu J."/>
            <person name="Wang Y."/>
            <person name="Shen Y."/>
            <person name="Lu W."/>
            <person name="Wang J."/>
            <person name="Liu H."/>
            <person name="Yang J."/>
            <person name="Yang F."/>
            <person name="Zhang X."/>
            <person name="Zhang J."/>
            <person name="Yang G."/>
            <person name="Wu H."/>
            <person name="Qu D."/>
            <person name="Dong J."/>
            <person name="Sun L."/>
            <person name="Xue Y."/>
            <person name="Zhao A."/>
            <person name="Gao Y."/>
            <person name="Zhu J."/>
            <person name="Kan B."/>
            <person name="Ding K."/>
            <person name="Chen S."/>
            <person name="Cheng H."/>
            <person name="Yao Z."/>
            <person name="He B."/>
            <person name="Chen R."/>
            <person name="Ma D."/>
            <person name="Qiang B."/>
            <person name="Wen Y."/>
            <person name="Hou Y."/>
            <person name="Yu J."/>
        </authorList>
    </citation>
    <scope>NUCLEOTIDE SEQUENCE [LARGE SCALE GENOMIC DNA]</scope>
    <source>
        <strain>301 / Serotype 2a</strain>
    </source>
</reference>
<reference key="2">
    <citation type="journal article" date="2003" name="Infect. Immun.">
        <title>Complete genome sequence and comparative genomics of Shigella flexneri serotype 2a strain 2457T.</title>
        <authorList>
            <person name="Wei J."/>
            <person name="Goldberg M.B."/>
            <person name="Burland V."/>
            <person name="Venkatesan M.M."/>
            <person name="Deng W."/>
            <person name="Fournier G."/>
            <person name="Mayhew G.F."/>
            <person name="Plunkett G. III"/>
            <person name="Rose D.J."/>
            <person name="Darling A."/>
            <person name="Mau B."/>
            <person name="Perna N.T."/>
            <person name="Payne S.M."/>
            <person name="Runyen-Janecky L.J."/>
            <person name="Zhou S."/>
            <person name="Schwartz D.C."/>
            <person name="Blattner F.R."/>
        </authorList>
    </citation>
    <scope>NUCLEOTIDE SEQUENCE [LARGE SCALE GENOMIC DNA]</scope>
    <source>
        <strain>ATCC 700930 / 2457T / Serotype 2a</strain>
    </source>
</reference>
<accession>P0ACN3</accession>
<accession>P39316</accession>
<evidence type="ECO:0000255" key="1">
    <source>
        <dbReference type="PROSITE-ProRule" id="PRU00435"/>
    </source>
</evidence>
<evidence type="ECO:0000305" key="2"/>
<proteinExistence type="predicted"/>